<gene>
    <name evidence="1" type="primary">deoA</name>
    <name type="ordered locus">PBPRA0631</name>
</gene>
<keyword id="KW-0328">Glycosyltransferase</keyword>
<keyword id="KW-1185">Reference proteome</keyword>
<keyword id="KW-0808">Transferase</keyword>
<reference key="1">
    <citation type="journal article" date="2005" name="Science">
        <title>Life at depth: Photobacterium profundum genome sequence and expression analysis.</title>
        <authorList>
            <person name="Vezzi A."/>
            <person name="Campanaro S."/>
            <person name="D'Angelo M."/>
            <person name="Simonato F."/>
            <person name="Vitulo N."/>
            <person name="Lauro F.M."/>
            <person name="Cestaro A."/>
            <person name="Malacrida G."/>
            <person name="Simionati B."/>
            <person name="Cannata N."/>
            <person name="Romualdi C."/>
            <person name="Bartlett D.H."/>
            <person name="Valle G."/>
        </authorList>
    </citation>
    <scope>NUCLEOTIDE SEQUENCE [LARGE SCALE GENOMIC DNA]</scope>
    <source>
        <strain>ATCC BAA-1253 / SS9</strain>
    </source>
</reference>
<sequence>MYLPQEIIRKKRDNVELTADEINFFIQGIAKETMSEGQIAAFAMAIYFNDMTMDERVALTCAMRDSGMVIDWSHMNFDGPIVDKHSTGGVGDVTSLMLGPMVAACGGFVPMISGRGLGHTGGTLDKLESIPGYNITPTNDVFGQVTKDAGVAIIGQTGDLAPADKRVYATRDVTATVDNISLITASILSKKLAAGLGSLVMDVKVGSGAFMPTYEASEDLAKSIVAVANGAGTKTTALLTDMNQVLASTAGNALEVREAVQFLTGEYRNPRLFEVTMALCAEMLVNSGLASDIEQAREQLQAVLDNGKAATCFGKMVAGLGGPVDFMENYDNYLEKAEIAKPVFAETTGYAYAMDTRGLGMAVVGMGGGRRVASDSIDYAVGLSDMIRLGDEVNTDTALCVIHARSEAQWQEAANAVRANITIADEKPAPTPDVYRRIRAEDI</sequence>
<protein>
    <recommendedName>
        <fullName evidence="1">Thymidine phosphorylase</fullName>
        <ecNumber evidence="1">2.4.2.4</ecNumber>
    </recommendedName>
    <alternativeName>
        <fullName evidence="1">TdRPase</fullName>
    </alternativeName>
</protein>
<comment type="function">
    <text evidence="1">The enzymes which catalyze the reversible phosphorolysis of pyrimidine nucleosides are involved in the degradation of these compounds and in their utilization as carbon and energy sources, or in the rescue of pyrimidine bases for nucleotide synthesis.</text>
</comment>
<comment type="catalytic activity">
    <reaction evidence="1">
        <text>thymidine + phosphate = 2-deoxy-alpha-D-ribose 1-phosphate + thymine</text>
        <dbReference type="Rhea" id="RHEA:16037"/>
        <dbReference type="ChEBI" id="CHEBI:17748"/>
        <dbReference type="ChEBI" id="CHEBI:17821"/>
        <dbReference type="ChEBI" id="CHEBI:43474"/>
        <dbReference type="ChEBI" id="CHEBI:57259"/>
        <dbReference type="EC" id="2.4.2.4"/>
    </reaction>
</comment>
<comment type="pathway">
    <text evidence="1">Pyrimidine metabolism; dTMP biosynthesis via salvage pathway; dTMP from thymine: step 1/2.</text>
</comment>
<comment type="subunit">
    <text evidence="1">Homodimer.</text>
</comment>
<comment type="similarity">
    <text evidence="1">Belongs to the thymidine/pyrimidine-nucleoside phosphorylase family.</text>
</comment>
<comment type="sequence caution" evidence="2">
    <conflict type="erroneous initiation">
        <sequence resource="EMBL-CDS" id="CAG19052"/>
    </conflict>
</comment>
<evidence type="ECO:0000255" key="1">
    <source>
        <dbReference type="HAMAP-Rule" id="MF_01628"/>
    </source>
</evidence>
<evidence type="ECO:0000305" key="2"/>
<name>TYPH_PHOPR</name>
<feature type="chain" id="PRO_0000059058" description="Thymidine phosphorylase">
    <location>
        <begin position="1"/>
        <end position="443"/>
    </location>
</feature>
<organism>
    <name type="scientific">Photobacterium profundum (strain SS9)</name>
    <dbReference type="NCBI Taxonomy" id="298386"/>
    <lineage>
        <taxon>Bacteria</taxon>
        <taxon>Pseudomonadati</taxon>
        <taxon>Pseudomonadota</taxon>
        <taxon>Gammaproteobacteria</taxon>
        <taxon>Vibrionales</taxon>
        <taxon>Vibrionaceae</taxon>
        <taxon>Photobacterium</taxon>
    </lineage>
</organism>
<proteinExistence type="inferred from homology"/>
<accession>Q6LUH3</accession>
<dbReference type="EC" id="2.4.2.4" evidence="1"/>
<dbReference type="EMBL" id="CR378664">
    <property type="protein sequence ID" value="CAG19052.1"/>
    <property type="status" value="ALT_INIT"/>
    <property type="molecule type" value="Genomic_DNA"/>
</dbReference>
<dbReference type="SMR" id="Q6LUH3"/>
<dbReference type="STRING" id="298386.PBPRA0631"/>
<dbReference type="KEGG" id="ppr:PBPRA0631"/>
<dbReference type="eggNOG" id="COG0213">
    <property type="taxonomic scope" value="Bacteria"/>
</dbReference>
<dbReference type="HOGENOM" id="CLU_025040_0_1_6"/>
<dbReference type="UniPathway" id="UPA00578">
    <property type="reaction ID" value="UER00638"/>
</dbReference>
<dbReference type="Proteomes" id="UP000000593">
    <property type="component" value="Chromosome 1"/>
</dbReference>
<dbReference type="GO" id="GO:0005829">
    <property type="term" value="C:cytosol"/>
    <property type="evidence" value="ECO:0007669"/>
    <property type="project" value="TreeGrafter"/>
</dbReference>
<dbReference type="GO" id="GO:0004645">
    <property type="term" value="F:1,4-alpha-oligoglucan phosphorylase activity"/>
    <property type="evidence" value="ECO:0007669"/>
    <property type="project" value="InterPro"/>
</dbReference>
<dbReference type="GO" id="GO:0009032">
    <property type="term" value="F:thymidine phosphorylase activity"/>
    <property type="evidence" value="ECO:0007669"/>
    <property type="project" value="UniProtKB-UniRule"/>
</dbReference>
<dbReference type="GO" id="GO:0006206">
    <property type="term" value="P:pyrimidine nucleobase metabolic process"/>
    <property type="evidence" value="ECO:0007669"/>
    <property type="project" value="InterPro"/>
</dbReference>
<dbReference type="GO" id="GO:0046104">
    <property type="term" value="P:thymidine metabolic process"/>
    <property type="evidence" value="ECO:0007669"/>
    <property type="project" value="UniProtKB-UniRule"/>
</dbReference>
<dbReference type="FunFam" id="3.40.1030.10:FF:000001">
    <property type="entry name" value="Thymidine phosphorylase"/>
    <property type="match status" value="1"/>
</dbReference>
<dbReference type="FunFam" id="3.90.1170.30:FF:000001">
    <property type="entry name" value="Thymidine phosphorylase"/>
    <property type="match status" value="1"/>
</dbReference>
<dbReference type="Gene3D" id="3.40.1030.10">
    <property type="entry name" value="Nucleoside phosphorylase/phosphoribosyltransferase catalytic domain"/>
    <property type="match status" value="1"/>
</dbReference>
<dbReference type="Gene3D" id="3.90.1170.30">
    <property type="entry name" value="Pyrimidine nucleoside phosphorylase-like, C-terminal domain"/>
    <property type="match status" value="1"/>
</dbReference>
<dbReference type="Gene3D" id="1.20.970.10">
    <property type="entry name" value="Transferase, Pyrimidine Nucleoside Phosphorylase, Chain C"/>
    <property type="match status" value="1"/>
</dbReference>
<dbReference type="HAMAP" id="MF_01628">
    <property type="entry name" value="Thymid_phosp"/>
    <property type="match status" value="1"/>
</dbReference>
<dbReference type="InterPro" id="IPR000312">
    <property type="entry name" value="Glycosyl_Trfase_fam3"/>
</dbReference>
<dbReference type="InterPro" id="IPR017459">
    <property type="entry name" value="Glycosyl_Trfase_fam3_N_dom"/>
</dbReference>
<dbReference type="InterPro" id="IPR036320">
    <property type="entry name" value="Glycosyl_Trfase_fam3_N_dom_sf"/>
</dbReference>
<dbReference type="InterPro" id="IPR035902">
    <property type="entry name" value="Nuc_phospho_transferase"/>
</dbReference>
<dbReference type="InterPro" id="IPR036566">
    <property type="entry name" value="PYNP-like_C_sf"/>
</dbReference>
<dbReference type="InterPro" id="IPR013102">
    <property type="entry name" value="PYNP_C"/>
</dbReference>
<dbReference type="InterPro" id="IPR018090">
    <property type="entry name" value="Pyrmidine_PPas_bac/euk"/>
</dbReference>
<dbReference type="InterPro" id="IPR017872">
    <property type="entry name" value="Pyrmidine_PPase_CS"/>
</dbReference>
<dbReference type="InterPro" id="IPR000053">
    <property type="entry name" value="Thymidine/pyrmidine_PPase"/>
</dbReference>
<dbReference type="InterPro" id="IPR013465">
    <property type="entry name" value="Thymidine_Pase"/>
</dbReference>
<dbReference type="NCBIfam" id="NF004490">
    <property type="entry name" value="PRK05820.1"/>
    <property type="match status" value="1"/>
</dbReference>
<dbReference type="NCBIfam" id="TIGR02643">
    <property type="entry name" value="T_phosphoryl"/>
    <property type="match status" value="1"/>
</dbReference>
<dbReference type="NCBIfam" id="TIGR02644">
    <property type="entry name" value="Y_phosphoryl"/>
    <property type="match status" value="1"/>
</dbReference>
<dbReference type="PANTHER" id="PTHR10515">
    <property type="entry name" value="THYMIDINE PHOSPHORYLASE"/>
    <property type="match status" value="1"/>
</dbReference>
<dbReference type="PANTHER" id="PTHR10515:SF0">
    <property type="entry name" value="THYMIDINE PHOSPHORYLASE"/>
    <property type="match status" value="1"/>
</dbReference>
<dbReference type="Pfam" id="PF02885">
    <property type="entry name" value="Glycos_trans_3N"/>
    <property type="match status" value="1"/>
</dbReference>
<dbReference type="Pfam" id="PF00591">
    <property type="entry name" value="Glycos_transf_3"/>
    <property type="match status" value="1"/>
</dbReference>
<dbReference type="Pfam" id="PF07831">
    <property type="entry name" value="PYNP_C"/>
    <property type="match status" value="1"/>
</dbReference>
<dbReference type="PIRSF" id="PIRSF000478">
    <property type="entry name" value="TP_PyNP"/>
    <property type="match status" value="1"/>
</dbReference>
<dbReference type="SMART" id="SM00941">
    <property type="entry name" value="PYNP_C"/>
    <property type="match status" value="1"/>
</dbReference>
<dbReference type="SUPFAM" id="SSF52418">
    <property type="entry name" value="Nucleoside phosphorylase/phosphoribosyltransferase catalytic domain"/>
    <property type="match status" value="1"/>
</dbReference>
<dbReference type="SUPFAM" id="SSF47648">
    <property type="entry name" value="Nucleoside phosphorylase/phosphoribosyltransferase N-terminal domain"/>
    <property type="match status" value="1"/>
</dbReference>
<dbReference type="SUPFAM" id="SSF54680">
    <property type="entry name" value="Pyrimidine nucleoside phosphorylase C-terminal domain"/>
    <property type="match status" value="1"/>
</dbReference>
<dbReference type="PROSITE" id="PS00647">
    <property type="entry name" value="THYMID_PHOSPHORYLASE"/>
    <property type="match status" value="1"/>
</dbReference>